<keyword id="KW-1003">Cell membrane</keyword>
<keyword id="KW-0178">Competence</keyword>
<keyword id="KW-0472">Membrane</keyword>
<keyword id="KW-1185">Reference proteome</keyword>
<keyword id="KW-0812">Transmembrane</keyword>
<keyword id="KW-1133">Transmembrane helix</keyword>
<keyword id="KW-0813">Transport</keyword>
<organism>
    <name type="scientific">Halalkalibacterium halodurans (strain ATCC BAA-125 / DSM 18197 / FERM 7344 / JCM 9153 / C-125)</name>
    <name type="common">Bacillus halodurans</name>
    <dbReference type="NCBI Taxonomy" id="272558"/>
    <lineage>
        <taxon>Bacteria</taxon>
        <taxon>Bacillati</taxon>
        <taxon>Bacillota</taxon>
        <taxon>Bacilli</taxon>
        <taxon>Bacillales</taxon>
        <taxon>Bacillaceae</taxon>
        <taxon>Halalkalibacterium (ex Joshi et al. 2022)</taxon>
    </lineage>
</organism>
<evidence type="ECO:0000250" key="1"/>
<evidence type="ECO:0000255" key="2"/>
<evidence type="ECO:0000305" key="3"/>
<sequence length="323" mass="37551">MLEQGYHLYEAVQFLAIHAPSSAQKKMNAMLMDLRSGYPLHKALDHLQLPQDVQLLLYVSERNGDLAQGFRKSGELFKKREEMKRKWEGAMRYPLLLIIVTLLLMFILMYFVLPHHQTLYRSLQIELPVITKLVIACSEKLPWLFTAFFVVAILLVLTYFVTFHRFPPTKKVTVLLRIPGLSQWTKEVITCLFCLTLGGLLKGGLSIMEALSICKEQDFFLFFRSEGEEMMLELENGERLYECLRRRPHYLKELPFVVENGEKTGNLAKDLLYFSDYQLEEFERRVKKWLVAIQPIVFSMIGAVILVLFLAMMLPVFQMIGAI</sequence>
<protein>
    <recommendedName>
        <fullName>ComG operon protein 2 homolog</fullName>
    </recommendedName>
</protein>
<dbReference type="EMBL" id="BA000004">
    <property type="protein sequence ID" value="BAB06550.1"/>
    <property type="molecule type" value="Genomic_DNA"/>
</dbReference>
<dbReference type="EMBL" id="AB013377">
    <property type="protein sequence ID" value="BAA75394.1"/>
    <property type="molecule type" value="Genomic_DNA"/>
</dbReference>
<dbReference type="PIR" id="G84003">
    <property type="entry name" value="G84003"/>
</dbReference>
<dbReference type="SMR" id="Q9K920"/>
<dbReference type="STRING" id="272558.gene:10728740"/>
<dbReference type="KEGG" id="bha:BH2831"/>
<dbReference type="eggNOG" id="COG1459">
    <property type="taxonomic scope" value="Bacteria"/>
</dbReference>
<dbReference type="HOGENOM" id="CLU_035032_1_1_9"/>
<dbReference type="Proteomes" id="UP000001258">
    <property type="component" value="Chromosome"/>
</dbReference>
<dbReference type="GO" id="GO:0005886">
    <property type="term" value="C:plasma membrane"/>
    <property type="evidence" value="ECO:0007669"/>
    <property type="project" value="UniProtKB-SubCell"/>
</dbReference>
<dbReference type="GO" id="GO:0030420">
    <property type="term" value="P:establishment of competence for transformation"/>
    <property type="evidence" value="ECO:0007669"/>
    <property type="project" value="UniProtKB-KW"/>
</dbReference>
<dbReference type="GO" id="GO:0009306">
    <property type="term" value="P:protein secretion"/>
    <property type="evidence" value="ECO:0007669"/>
    <property type="project" value="InterPro"/>
</dbReference>
<dbReference type="Gene3D" id="1.20.81.30">
    <property type="entry name" value="Type II secretion system (T2SS), domain F"/>
    <property type="match status" value="2"/>
</dbReference>
<dbReference type="InterPro" id="IPR003004">
    <property type="entry name" value="GspF/PilC"/>
</dbReference>
<dbReference type="InterPro" id="IPR001992">
    <property type="entry name" value="T2SS_GspF/T4SS_PilC_CS"/>
</dbReference>
<dbReference type="InterPro" id="IPR018076">
    <property type="entry name" value="T2SS_GspF_dom"/>
</dbReference>
<dbReference type="InterPro" id="IPR042094">
    <property type="entry name" value="T2SS_GspF_sf"/>
</dbReference>
<dbReference type="InterPro" id="IPR047692">
    <property type="entry name" value="T4P_ComGB"/>
</dbReference>
<dbReference type="NCBIfam" id="NF041012">
    <property type="entry name" value="T4P_ComGB"/>
    <property type="match status" value="1"/>
</dbReference>
<dbReference type="PANTHER" id="PTHR30012">
    <property type="entry name" value="GENERAL SECRETION PATHWAY PROTEIN"/>
    <property type="match status" value="1"/>
</dbReference>
<dbReference type="PANTHER" id="PTHR30012:SF0">
    <property type="entry name" value="TYPE II SECRETION SYSTEM PROTEIN F-RELATED"/>
    <property type="match status" value="1"/>
</dbReference>
<dbReference type="Pfam" id="PF00482">
    <property type="entry name" value="T2SSF"/>
    <property type="match status" value="2"/>
</dbReference>
<dbReference type="PRINTS" id="PR00812">
    <property type="entry name" value="BCTERIALGSPF"/>
</dbReference>
<dbReference type="PROSITE" id="PS00874">
    <property type="entry name" value="T2SP_F"/>
    <property type="match status" value="1"/>
</dbReference>
<accession>Q9K920</accession>
<accession>Q9Z9N8</accession>
<gene>
    <name type="primary">comGB</name>
    <name type="ordered locus">BH2831</name>
</gene>
<proteinExistence type="inferred from homology"/>
<feature type="chain" id="PRO_0000207838" description="ComG operon protein 2 homolog">
    <location>
        <begin position="1"/>
        <end position="323"/>
    </location>
</feature>
<feature type="transmembrane region" description="Helical" evidence="2">
    <location>
        <begin position="93"/>
        <end position="113"/>
    </location>
</feature>
<feature type="transmembrane region" description="Helical" evidence="2">
    <location>
        <begin position="141"/>
        <end position="161"/>
    </location>
</feature>
<feature type="transmembrane region" description="Helical" evidence="2">
    <location>
        <begin position="188"/>
        <end position="208"/>
    </location>
</feature>
<feature type="transmembrane region" description="Helical" evidence="2">
    <location>
        <begin position="296"/>
        <end position="316"/>
    </location>
</feature>
<name>COMGB_HALH5</name>
<reference key="1">
    <citation type="journal article" date="2000" name="Nucleic Acids Res.">
        <title>Complete genome sequence of the alkaliphilic bacterium Bacillus halodurans and genomic sequence comparison with Bacillus subtilis.</title>
        <authorList>
            <person name="Takami H."/>
            <person name="Nakasone K."/>
            <person name="Takaki Y."/>
            <person name="Maeno G."/>
            <person name="Sasaki R."/>
            <person name="Masui N."/>
            <person name="Fuji F."/>
            <person name="Hirama C."/>
            <person name="Nakamura Y."/>
            <person name="Ogasawara N."/>
            <person name="Kuhara S."/>
            <person name="Horikoshi K."/>
        </authorList>
    </citation>
    <scope>NUCLEOTIDE SEQUENCE [LARGE SCALE GENOMIC DNA]</scope>
    <source>
        <strain>ATCC BAA-125 / DSM 18197 / FERM 7344 / JCM 9153 / C-125</strain>
    </source>
</reference>
<reference key="2">
    <citation type="journal article" date="1999" name="Extremophiles">
        <title>An improved physical and genetic map of the genome of alkaliphilic Bacillus sp. C-125.</title>
        <authorList>
            <person name="Takami H."/>
            <person name="Nakasone K."/>
            <person name="Hirama C."/>
            <person name="Takaki Y."/>
            <person name="Masui N."/>
            <person name="Fuji F."/>
            <person name="Nakamura Y."/>
            <person name="Inoue A."/>
        </authorList>
    </citation>
    <scope>NUCLEOTIDE SEQUENCE [GENOMIC DNA] OF 140-323</scope>
    <source>
        <strain>ATCC BAA-125 / DSM 18197 / FERM 7344 / JCM 9153 / C-125</strain>
    </source>
</reference>
<comment type="function">
    <text evidence="1">Required for transformation and DNA binding.</text>
</comment>
<comment type="subcellular location">
    <subcellularLocation>
        <location evidence="3">Cell membrane</location>
        <topology evidence="3">Multi-pass membrane protein</topology>
    </subcellularLocation>
</comment>
<comment type="similarity">
    <text evidence="3">Belongs to the GSP F family.</text>
</comment>